<accession>Q6L1K9</accession>
<dbReference type="EC" id="2.7.7.7" evidence="2"/>
<dbReference type="EC" id="3.1.11.1" evidence="2"/>
<dbReference type="EMBL" id="AE017261">
    <property type="protein sequence ID" value="AAT43143.1"/>
    <property type="molecule type" value="Genomic_DNA"/>
</dbReference>
<dbReference type="RefSeq" id="WP_011177359.1">
    <property type="nucleotide sequence ID" value="NC_005877.1"/>
</dbReference>
<dbReference type="SMR" id="Q6L1K9"/>
<dbReference type="STRING" id="263820.PTO0558"/>
<dbReference type="PaxDb" id="263820-PTO0558"/>
<dbReference type="GeneID" id="2844296"/>
<dbReference type="KEGG" id="pto:PTO0558"/>
<dbReference type="PATRIC" id="fig|263820.9.peg.587"/>
<dbReference type="eggNOG" id="arCOG04447">
    <property type="taxonomic scope" value="Archaea"/>
</dbReference>
<dbReference type="HOGENOM" id="CLU_001154_0_0_2"/>
<dbReference type="InParanoid" id="Q6L1K9"/>
<dbReference type="OrthoDB" id="7529at2157"/>
<dbReference type="Proteomes" id="UP000000438">
    <property type="component" value="Chromosome"/>
</dbReference>
<dbReference type="GO" id="GO:0003677">
    <property type="term" value="F:DNA binding"/>
    <property type="evidence" value="ECO:0007669"/>
    <property type="project" value="UniProtKB-UniRule"/>
</dbReference>
<dbReference type="GO" id="GO:0003887">
    <property type="term" value="F:DNA-directed DNA polymerase activity"/>
    <property type="evidence" value="ECO:0007669"/>
    <property type="project" value="UniProtKB-UniRule"/>
</dbReference>
<dbReference type="GO" id="GO:0008310">
    <property type="term" value="F:single-stranded DNA 3'-5' DNA exonuclease activity"/>
    <property type="evidence" value="ECO:0007669"/>
    <property type="project" value="UniProtKB-EC"/>
</dbReference>
<dbReference type="GO" id="GO:0006308">
    <property type="term" value="P:DNA catabolic process"/>
    <property type="evidence" value="ECO:0007669"/>
    <property type="project" value="UniProtKB-UniRule"/>
</dbReference>
<dbReference type="GO" id="GO:0006261">
    <property type="term" value="P:DNA-templated DNA replication"/>
    <property type="evidence" value="ECO:0007669"/>
    <property type="project" value="UniProtKB-UniRule"/>
</dbReference>
<dbReference type="HAMAP" id="MF_00324">
    <property type="entry name" value="DNApol_II_L_arch"/>
    <property type="match status" value="1"/>
</dbReference>
<dbReference type="InterPro" id="IPR004475">
    <property type="entry name" value="PolC_DP2"/>
</dbReference>
<dbReference type="InterPro" id="IPR056172">
    <property type="entry name" value="PolC_DP2_cat_dom"/>
</dbReference>
<dbReference type="InterPro" id="IPR056171">
    <property type="entry name" value="PolC_DP2_central_dom"/>
</dbReference>
<dbReference type="InterPro" id="IPR016033">
    <property type="entry name" value="PolC_DP2_N"/>
</dbReference>
<dbReference type="NCBIfam" id="TIGR00354">
    <property type="entry name" value="polC"/>
    <property type="match status" value="1"/>
</dbReference>
<dbReference type="NCBIfam" id="NF003103">
    <property type="entry name" value="PRK04023.1"/>
    <property type="match status" value="1"/>
</dbReference>
<dbReference type="PANTHER" id="PTHR42210">
    <property type="entry name" value="DNA POLYMERASE II LARGE SUBUNIT"/>
    <property type="match status" value="1"/>
</dbReference>
<dbReference type="PANTHER" id="PTHR42210:SF1">
    <property type="entry name" value="DNA POLYMERASE II LARGE SUBUNIT"/>
    <property type="match status" value="1"/>
</dbReference>
<dbReference type="Pfam" id="PF24846">
    <property type="entry name" value="PolC_DP2_cat"/>
    <property type="match status" value="1"/>
</dbReference>
<dbReference type="Pfam" id="PF24844">
    <property type="entry name" value="PolC_DP2_central"/>
    <property type="match status" value="1"/>
</dbReference>
<dbReference type="Pfam" id="PF03833">
    <property type="entry name" value="PolC_DP2_N"/>
    <property type="match status" value="1"/>
</dbReference>
<dbReference type="PIRSF" id="PIRSF016275">
    <property type="entry name" value="PolC_DP2"/>
    <property type="match status" value="1"/>
</dbReference>
<reference key="1">
    <citation type="journal article" date="2004" name="Proc. Natl. Acad. Sci. U.S.A.">
        <title>Genome sequence of Picrophilus torridus and its implications for life around pH 0.</title>
        <authorList>
            <person name="Fuetterer O."/>
            <person name="Angelov A."/>
            <person name="Liesegang H."/>
            <person name="Gottschalk G."/>
            <person name="Schleper C."/>
            <person name="Schepers B."/>
            <person name="Dock C."/>
            <person name="Antranikian G."/>
            <person name="Liebl W."/>
        </authorList>
    </citation>
    <scope>NUCLEOTIDE SEQUENCE [LARGE SCALE GENOMIC DNA]</scope>
    <source>
        <strain>ATCC 700027 / DSM 9790 / JCM 10055 / NBRC 100828 / KAW 2/3</strain>
    </source>
</reference>
<proteinExistence type="inferred from homology"/>
<organism>
    <name type="scientific">Picrophilus torridus (strain ATCC 700027 / DSM 9790 / JCM 10055 / NBRC 100828 / KAW 2/3)</name>
    <dbReference type="NCBI Taxonomy" id="1122961"/>
    <lineage>
        <taxon>Archaea</taxon>
        <taxon>Methanobacteriati</taxon>
        <taxon>Thermoplasmatota</taxon>
        <taxon>Thermoplasmata</taxon>
        <taxon>Thermoplasmatales</taxon>
        <taxon>Picrophilaceae</taxon>
        <taxon>Picrophilus</taxon>
    </lineage>
</organism>
<name>DP2L_PICTO</name>
<sequence length="1080" mass="121576">MIDHSLFDYNERLRKETYECYEIAKKARAMGLDVSDEVEIPIANDMAERVEELIHISGIAGEIRELSKSMSREELSLHISKKVASLLKDNRVEALDKAVRVGLAILTEGILVAPLEGIKDVKINKNDDGTEYVSIVYSGPIRSAGGTAQALSVLIADIVRRELNIGSFSPTDDEIERYIEEVEAYNRLKHLQYMPTPDEIRLVLKNSPVMIDGEGSEEEEVSGHRDMKRITTNRIRGGMCLVLCEGLIQKAKKVLKYTNVMHLNEWNILENIGKNKSDEKTENKSEKYLKDIIAGRPVFGYPNRPGGFRLRYGRSRVSGLAAASINPVTMKILNDFIAIGSQIKVELPGKAAAITPCDSIDGPMVLTRSGDHIKVKSIEQAEKIKNDIERITDLGEILIAYGDFLENNRNLDLSPFTREWWEYYLNDELSIYKSRDPDQFDAVNISRKYKMPMFPGYDYFWHDITMEELNLLINAIANGIINDDSMMLDASVSEILIKLGIEFKKHNNKLILHEYYPLIVSCGFDLINEKIVKVSDERKNDVLGTVNALSGIEIKPRAPVRVGARLGRPEKAGDRKMKPKVHGLFPLMNYGGSTRSIINAARSGSIMDIELGARICRACGTETPFVRCPKCGMPTEDSDSEKKFKIDISKALDDAALRVSTDIGTIKELKGVKKLMSRRSVIEPLEKAILRAKHGISINKDGTCRYDMSDIPITHFKYNEISLTRQRLMELGYSDSDINEIYPQDIIIPRDAASYLLNVSKFIDDLLVNYYGLGPYYMCNSEDDLIGHLVIGLAPHTSGGIVGRIIGFSDVNGCYAHPFFHAAKRRNCDGDEDSIMLLLDGLLNFSKKYLPSTTGGLMDAPLVLTLILDPEEIDKEALNVDTLQRYPLDFYIATEKNAPPASIENMMKTMKVLIKDGRYTGISYSFDTGDISYGTRLSAYKTIGSMEEKIEKQLGLARILRSVDENDVAARVLSSHFLPDIYGNFRSFFTQEFRCTKCNAKYRRVPLSGRCLRCGSSNIILTIHHGSIVKYLNETKKVMNEYKLPDYLVFRINRLLEQIESTFDIENGNDTTLDALIENE</sequence>
<evidence type="ECO:0000250" key="1"/>
<evidence type="ECO:0000255" key="2">
    <source>
        <dbReference type="HAMAP-Rule" id="MF_00324"/>
    </source>
</evidence>
<protein>
    <recommendedName>
        <fullName evidence="2">DNA polymerase II large subunit</fullName>
        <shortName evidence="2">Pol II</shortName>
        <ecNumber evidence="2">2.7.7.7</ecNumber>
    </recommendedName>
    <alternativeName>
        <fullName evidence="2">Exodeoxyribonuclease large subunit</fullName>
        <ecNumber evidence="2">3.1.11.1</ecNumber>
    </alternativeName>
</protein>
<comment type="function">
    <text evidence="1">Possesses two activities: a DNA synthesis (polymerase) and an exonucleolytic activity that degrades single-stranded DNA in the 3'- to 5'-direction. Has a template-primer preference which is characteristic of a replicative DNA polymerase (By similarity).</text>
</comment>
<comment type="catalytic activity">
    <reaction evidence="2">
        <text>DNA(n) + a 2'-deoxyribonucleoside 5'-triphosphate = DNA(n+1) + diphosphate</text>
        <dbReference type="Rhea" id="RHEA:22508"/>
        <dbReference type="Rhea" id="RHEA-COMP:17339"/>
        <dbReference type="Rhea" id="RHEA-COMP:17340"/>
        <dbReference type="ChEBI" id="CHEBI:33019"/>
        <dbReference type="ChEBI" id="CHEBI:61560"/>
        <dbReference type="ChEBI" id="CHEBI:173112"/>
        <dbReference type="EC" id="2.7.7.7"/>
    </reaction>
</comment>
<comment type="catalytic activity">
    <reaction evidence="2">
        <text>Exonucleolytic cleavage in the 3'- to 5'-direction to yield nucleoside 5'-phosphates.</text>
        <dbReference type="EC" id="3.1.11.1"/>
    </reaction>
</comment>
<comment type="subunit">
    <text evidence="2">Heterodimer of a large subunit and a small subunit.</text>
</comment>
<comment type="similarity">
    <text evidence="2">Belongs to the archaeal DNA polymerase II family.</text>
</comment>
<keyword id="KW-0235">DNA replication</keyword>
<keyword id="KW-0238">DNA-binding</keyword>
<keyword id="KW-0239">DNA-directed DNA polymerase</keyword>
<keyword id="KW-0269">Exonuclease</keyword>
<keyword id="KW-0378">Hydrolase</keyword>
<keyword id="KW-0511">Multifunctional enzyme</keyword>
<keyword id="KW-0540">Nuclease</keyword>
<keyword id="KW-0548">Nucleotidyltransferase</keyword>
<keyword id="KW-0808">Transferase</keyword>
<gene>
    <name evidence="2" type="primary">polC</name>
    <name type="ordered locus">PTO0558</name>
</gene>
<feature type="chain" id="PRO_0000294699" description="DNA polymerase II large subunit">
    <location>
        <begin position="1"/>
        <end position="1080"/>
    </location>
</feature>